<protein>
    <recommendedName>
        <fullName evidence="2">Cysteine desulfurase</fullName>
        <ecNumber evidence="2">2.8.1.7</ecNumber>
    </recommendedName>
    <alternativeName>
        <fullName evidence="2">Nitrogenase metalloclusters biosynthesis protein NifS</fullName>
    </alternativeName>
</protein>
<organism>
    <name type="scientific">Enterobacter agglomerans</name>
    <name type="common">Erwinia herbicola</name>
    <name type="synonym">Pantoea agglomerans</name>
    <dbReference type="NCBI Taxonomy" id="549"/>
    <lineage>
        <taxon>Bacteria</taxon>
        <taxon>Pseudomonadati</taxon>
        <taxon>Pseudomonadota</taxon>
        <taxon>Gammaproteobacteria</taxon>
        <taxon>Enterobacterales</taxon>
        <taxon>Erwiniaceae</taxon>
        <taxon>Pantoea</taxon>
        <taxon>Pantoea agglomerans group</taxon>
    </lineage>
</organism>
<comment type="function">
    <text evidence="2">Catalyzes the removal of elemental sulfur atoms from cysteine to produce alanine. Seems to participate in the biosynthesis of the nitrogenase metalloclusters by providing the inorganic sulfur required for the Fe-S core formation.</text>
</comment>
<comment type="catalytic activity">
    <reaction evidence="2">
        <text>(sulfur carrier)-H + L-cysteine = (sulfur carrier)-SH + L-alanine</text>
        <dbReference type="Rhea" id="RHEA:43892"/>
        <dbReference type="Rhea" id="RHEA-COMP:14737"/>
        <dbReference type="Rhea" id="RHEA-COMP:14739"/>
        <dbReference type="ChEBI" id="CHEBI:29917"/>
        <dbReference type="ChEBI" id="CHEBI:35235"/>
        <dbReference type="ChEBI" id="CHEBI:57972"/>
        <dbReference type="ChEBI" id="CHEBI:64428"/>
        <dbReference type="EC" id="2.8.1.7"/>
    </reaction>
</comment>
<comment type="cofactor">
    <cofactor evidence="2">
        <name>pyridoxal 5'-phosphate</name>
        <dbReference type="ChEBI" id="CHEBI:597326"/>
    </cofactor>
</comment>
<comment type="subunit">
    <text evidence="2">Homodimer.</text>
</comment>
<comment type="similarity">
    <text evidence="4">Belongs to the class-V pyridoxal-phosphate-dependent aminotransferase family. NifS/IscS subfamily.</text>
</comment>
<accession>Q52069</accession>
<proteinExistence type="inferred from homology"/>
<dbReference type="EC" id="2.8.1.7" evidence="2"/>
<dbReference type="EMBL" id="X99694">
    <property type="protein sequence ID" value="CAA68020.1"/>
    <property type="molecule type" value="Genomic_DNA"/>
</dbReference>
<dbReference type="SMR" id="Q52069"/>
<dbReference type="GO" id="GO:0031071">
    <property type="term" value="F:cysteine desulfurase activity"/>
    <property type="evidence" value="ECO:0007669"/>
    <property type="project" value="UniProtKB-EC"/>
</dbReference>
<dbReference type="GO" id="GO:0051536">
    <property type="term" value="F:iron-sulfur cluster binding"/>
    <property type="evidence" value="ECO:0007669"/>
    <property type="project" value="UniProtKB-KW"/>
</dbReference>
<dbReference type="GO" id="GO:0046872">
    <property type="term" value="F:metal ion binding"/>
    <property type="evidence" value="ECO:0007669"/>
    <property type="project" value="UniProtKB-KW"/>
</dbReference>
<dbReference type="GO" id="GO:0030170">
    <property type="term" value="F:pyridoxal phosphate binding"/>
    <property type="evidence" value="ECO:0007669"/>
    <property type="project" value="InterPro"/>
</dbReference>
<dbReference type="GO" id="GO:0006520">
    <property type="term" value="P:amino acid metabolic process"/>
    <property type="evidence" value="ECO:0007669"/>
    <property type="project" value="InterPro"/>
</dbReference>
<dbReference type="GO" id="GO:0009399">
    <property type="term" value="P:nitrogen fixation"/>
    <property type="evidence" value="ECO:0007669"/>
    <property type="project" value="UniProtKB-KW"/>
</dbReference>
<dbReference type="FunFam" id="3.40.640.10:FF:000084">
    <property type="entry name" value="IscS-like cysteine desulfurase"/>
    <property type="match status" value="1"/>
</dbReference>
<dbReference type="Gene3D" id="1.10.260.50">
    <property type="match status" value="1"/>
</dbReference>
<dbReference type="Gene3D" id="3.90.1150.10">
    <property type="entry name" value="Aspartate Aminotransferase, domain 1"/>
    <property type="match status" value="1"/>
</dbReference>
<dbReference type="Gene3D" id="3.40.640.10">
    <property type="entry name" value="Type I PLP-dependent aspartate aminotransferase-like (Major domain)"/>
    <property type="match status" value="1"/>
</dbReference>
<dbReference type="InterPro" id="IPR000192">
    <property type="entry name" value="Aminotrans_V_dom"/>
</dbReference>
<dbReference type="InterPro" id="IPR020578">
    <property type="entry name" value="Aminotrans_V_PyrdxlP_BS"/>
</dbReference>
<dbReference type="InterPro" id="IPR017772">
    <property type="entry name" value="Cys_deSase_NifS_bac/arc"/>
</dbReference>
<dbReference type="InterPro" id="IPR016454">
    <property type="entry name" value="Cysteine_dSase"/>
</dbReference>
<dbReference type="InterPro" id="IPR015424">
    <property type="entry name" value="PyrdxlP-dep_Trfase"/>
</dbReference>
<dbReference type="InterPro" id="IPR015421">
    <property type="entry name" value="PyrdxlP-dep_Trfase_major"/>
</dbReference>
<dbReference type="InterPro" id="IPR015422">
    <property type="entry name" value="PyrdxlP-dep_Trfase_small"/>
</dbReference>
<dbReference type="NCBIfam" id="TIGR03402">
    <property type="entry name" value="FeS_nifS"/>
    <property type="match status" value="1"/>
</dbReference>
<dbReference type="PANTHER" id="PTHR11601:SF34">
    <property type="entry name" value="CYSTEINE DESULFURASE"/>
    <property type="match status" value="1"/>
</dbReference>
<dbReference type="PANTHER" id="PTHR11601">
    <property type="entry name" value="CYSTEINE DESULFURYLASE FAMILY MEMBER"/>
    <property type="match status" value="1"/>
</dbReference>
<dbReference type="Pfam" id="PF00266">
    <property type="entry name" value="Aminotran_5"/>
    <property type="match status" value="1"/>
</dbReference>
<dbReference type="PIRSF" id="PIRSF005572">
    <property type="entry name" value="NifS"/>
    <property type="match status" value="1"/>
</dbReference>
<dbReference type="SUPFAM" id="SSF53383">
    <property type="entry name" value="PLP-dependent transferases"/>
    <property type="match status" value="1"/>
</dbReference>
<dbReference type="PROSITE" id="PS00595">
    <property type="entry name" value="AA_TRANSFER_CLASS_5"/>
    <property type="match status" value="1"/>
</dbReference>
<evidence type="ECO:0000250" key="1">
    <source>
        <dbReference type="UniProtKB" id="O29689"/>
    </source>
</evidence>
<evidence type="ECO:0000250" key="2">
    <source>
        <dbReference type="UniProtKB" id="P05341"/>
    </source>
</evidence>
<evidence type="ECO:0000250" key="3">
    <source>
        <dbReference type="UniProtKB" id="P0A6B9"/>
    </source>
</evidence>
<evidence type="ECO:0000305" key="4"/>
<keyword id="KW-0408">Iron</keyword>
<keyword id="KW-0411">Iron-sulfur</keyword>
<keyword id="KW-0479">Metal-binding</keyword>
<keyword id="KW-0535">Nitrogen fixation</keyword>
<keyword id="KW-0614">Plasmid</keyword>
<keyword id="KW-0663">Pyridoxal phosphate</keyword>
<keyword id="KW-0808">Transferase</keyword>
<gene>
    <name evidence="2" type="primary">nifS</name>
</gene>
<feature type="chain" id="PRO_0000150254" description="Cysteine desulfurase">
    <location>
        <begin position="1"/>
        <end position="401"/>
    </location>
</feature>
<feature type="active site" description="Cysteine persulfide intermediate" evidence="2">
    <location>
        <position position="324"/>
    </location>
</feature>
<feature type="binding site" evidence="3">
    <location>
        <begin position="72"/>
        <end position="73"/>
    </location>
    <ligand>
        <name>pyridoxal 5'-phosphate</name>
        <dbReference type="ChEBI" id="CHEBI:597326"/>
    </ligand>
</feature>
<feature type="binding site" evidence="1">
    <location>
        <position position="151"/>
    </location>
    <ligand>
        <name>pyridoxal 5'-phosphate</name>
        <dbReference type="ChEBI" id="CHEBI:597326"/>
    </ligand>
</feature>
<feature type="binding site" evidence="3">
    <location>
        <position position="179"/>
    </location>
    <ligand>
        <name>pyridoxal 5'-phosphate</name>
        <dbReference type="ChEBI" id="CHEBI:597326"/>
    </ligand>
</feature>
<feature type="binding site" evidence="3">
    <location>
        <begin position="199"/>
        <end position="201"/>
    </location>
    <ligand>
        <name>pyridoxal 5'-phosphate</name>
        <dbReference type="ChEBI" id="CHEBI:597326"/>
    </ligand>
</feature>
<feature type="binding site" evidence="3">
    <location>
        <position position="237"/>
    </location>
    <ligand>
        <name>pyridoxal 5'-phosphate</name>
        <dbReference type="ChEBI" id="CHEBI:597326"/>
    </ligand>
</feature>
<feature type="binding site" description="via persulfide group" evidence="1">
    <location>
        <position position="324"/>
    </location>
    <ligand>
        <name>[2Fe-2S] cluster</name>
        <dbReference type="ChEBI" id="CHEBI:190135"/>
    </ligand>
</feature>
<feature type="modified residue" description="N6-(pyridoxal phosphate)lysine" evidence="3">
    <location>
        <position position="202"/>
    </location>
</feature>
<geneLocation type="plasmid">
    <name>pEA3</name>
</geneLocation>
<name>NIFS_ENTAG</name>
<reference key="1">
    <citation type="submission" date="1996-07" db="EMBL/GenBank/DDBJ databases">
        <authorList>
            <person name="Steibl H."/>
        </authorList>
    </citation>
    <scope>NUCLEOTIDE SEQUENCE [GENOMIC DNA]</scope>
    <source>
        <strain>333</strain>
    </source>
</reference>
<sequence length="401" mass="43874">MKNVYLDNNATTRIDPMVLEAMMPYLRDYYGNPSSIHDFGGPCRAGLECAREQVASLLGAAYTSEIIFTSCATEATSTAIYSAIALAPERREIITTAVEHPATLAVCEHLERQGYMIHRIGVSEEGALDTAHYYDALSENVALVTMMWANNETGVLFPVSEMATAAHERGILFHCDAVQAVGKIPISLRATDIDMLSCSAHKIHGPKGCGCLYLRRNTRFRPLVRGGHQERGRRAGTENIAGIVGMGAACELADVHMPMMASVQEMRDRLETGLLTTIPHTLLMGANQPRTPNTVNIAFEYIEGEAILLLLNHCGIAASSGSACTSGSLEPSHVMRAMNIPYTAAHGSIRFSLSRFTREREIEWAIEQMPDIVARLRTLSPYWQQDKVQIAQGGLFAPTYG</sequence>